<evidence type="ECO:0000250" key="1"/>
<evidence type="ECO:0000255" key="2"/>
<evidence type="ECO:0000256" key="3">
    <source>
        <dbReference type="SAM" id="MobiDB-lite"/>
    </source>
</evidence>
<evidence type="ECO:0000269" key="4">
    <source>
    </source>
</evidence>
<evidence type="ECO:0000305" key="5"/>
<evidence type="ECO:0007829" key="6">
    <source>
        <dbReference type="PDB" id="7Q21"/>
    </source>
</evidence>
<evidence type="ECO:0007829" key="7">
    <source>
        <dbReference type="PDB" id="7QHM"/>
    </source>
</evidence>
<evidence type="ECO:0007829" key="8">
    <source>
        <dbReference type="PDB" id="7QHO"/>
    </source>
</evidence>
<name>COX1_CORGL</name>
<accession>Q79VD7</accession>
<accession>Q93HZ5</accession>
<accession>Q9AEL9</accession>
<feature type="chain" id="PRO_0000183440" description="Cytochrome c oxidase subunit 1">
    <location>
        <begin position="1"/>
        <end position="584"/>
    </location>
</feature>
<feature type="transmembrane region" description="Helical" evidence="2">
    <location>
        <begin position="43"/>
        <end position="63"/>
    </location>
</feature>
<feature type="transmembrane region" description="Helical" evidence="2">
    <location>
        <begin position="90"/>
        <end position="110"/>
    </location>
</feature>
<feature type="transmembrane region" description="Helical" evidence="2">
    <location>
        <begin position="122"/>
        <end position="142"/>
    </location>
</feature>
<feature type="transmembrane region" description="Helical" evidence="2">
    <location>
        <begin position="171"/>
        <end position="191"/>
    </location>
</feature>
<feature type="transmembrane region" description="Helical" evidence="2">
    <location>
        <begin position="214"/>
        <end position="234"/>
    </location>
</feature>
<feature type="transmembrane region" description="Helical" evidence="2">
    <location>
        <begin position="259"/>
        <end position="279"/>
    </location>
</feature>
<feature type="transmembrane region" description="Helical" evidence="2">
    <location>
        <begin position="292"/>
        <end position="312"/>
    </location>
</feature>
<feature type="transmembrane region" description="Helical" evidence="2">
    <location>
        <begin position="316"/>
        <end position="336"/>
    </location>
</feature>
<feature type="transmembrane region" description="Helical" evidence="2">
    <location>
        <begin position="360"/>
        <end position="380"/>
    </location>
</feature>
<feature type="transmembrane region" description="Helical" evidence="2">
    <location>
        <begin position="399"/>
        <end position="419"/>
    </location>
</feature>
<feature type="transmembrane region" description="Helical" evidence="2">
    <location>
        <begin position="434"/>
        <end position="454"/>
    </location>
</feature>
<feature type="transmembrane region" description="Helical" evidence="2">
    <location>
        <begin position="477"/>
        <end position="497"/>
    </location>
</feature>
<feature type="region of interest" description="Disordered" evidence="3">
    <location>
        <begin position="1"/>
        <end position="25"/>
    </location>
</feature>
<feature type="region of interest" description="Disordered" evidence="3">
    <location>
        <begin position="564"/>
        <end position="584"/>
    </location>
</feature>
<feature type="binding site" description="axial binding residue" evidence="5">
    <location>
        <position position="87"/>
    </location>
    <ligand>
        <name>Fe(II)-heme a</name>
        <dbReference type="ChEBI" id="CHEBI:61715"/>
    </ligand>
    <ligandPart>
        <name>Fe</name>
        <dbReference type="ChEBI" id="CHEBI:18248"/>
    </ligandPart>
</feature>
<feature type="binding site" evidence="5">
    <location>
        <position position="265"/>
    </location>
    <ligand>
        <name>Cu cation</name>
        <dbReference type="ChEBI" id="CHEBI:23378"/>
        <label>B</label>
    </ligand>
</feature>
<feature type="binding site" evidence="5">
    <location>
        <position position="269"/>
    </location>
    <ligand>
        <name>Cu cation</name>
        <dbReference type="ChEBI" id="CHEBI:23378"/>
        <label>B</label>
    </ligand>
</feature>
<feature type="binding site" evidence="5">
    <location>
        <position position="314"/>
    </location>
    <ligand>
        <name>Cu cation</name>
        <dbReference type="ChEBI" id="CHEBI:23378"/>
        <label>B</label>
    </ligand>
</feature>
<feature type="binding site" evidence="5">
    <location>
        <position position="315"/>
    </location>
    <ligand>
        <name>Cu cation</name>
        <dbReference type="ChEBI" id="CHEBI:23378"/>
        <label>B</label>
    </ligand>
</feature>
<feature type="binding site" description="axial binding residue" evidence="5">
    <location>
        <position position="398"/>
    </location>
    <ligand>
        <name>heme a3</name>
        <dbReference type="ChEBI" id="CHEBI:83282"/>
    </ligand>
    <ligandPart>
        <name>Fe</name>
        <dbReference type="ChEBI" id="CHEBI:18248"/>
    </ligandPart>
</feature>
<feature type="binding site" description="axial binding residue" evidence="5">
    <location>
        <position position="400"/>
    </location>
    <ligand>
        <name>Fe(II)-heme a</name>
        <dbReference type="ChEBI" id="CHEBI:61715"/>
    </ligand>
    <ligandPart>
        <name>Fe</name>
        <dbReference type="ChEBI" id="CHEBI:18248"/>
    </ligandPart>
</feature>
<feature type="cross-link" description="1'-histidyl-3'-tyrosine (His-Tyr)" evidence="1">
    <location>
        <begin position="265"/>
        <end position="269"/>
    </location>
</feature>
<feature type="sequence conflict" description="In Ref. 2; BAB64406." evidence="5" ref="2">
    <original>R</original>
    <variation>S</variation>
    <location>
        <position position="554"/>
    </location>
</feature>
<feature type="turn" evidence="6">
    <location>
        <begin position="25"/>
        <end position="28"/>
    </location>
</feature>
<feature type="helix" evidence="7">
    <location>
        <begin position="29"/>
        <end position="34"/>
    </location>
</feature>
<feature type="helix" evidence="7">
    <location>
        <begin position="38"/>
        <end position="66"/>
    </location>
</feature>
<feature type="strand" evidence="7">
    <location>
        <begin position="68"/>
        <end position="71"/>
    </location>
</feature>
<feature type="helix" evidence="7">
    <location>
        <begin position="77"/>
        <end position="93"/>
    </location>
</feature>
<feature type="helix" evidence="7">
    <location>
        <begin position="96"/>
        <end position="112"/>
    </location>
</feature>
<feature type="helix" evidence="7">
    <location>
        <begin position="120"/>
        <end position="138"/>
    </location>
</feature>
<feature type="helix" evidence="7">
    <location>
        <begin position="139"/>
        <end position="142"/>
    </location>
</feature>
<feature type="strand" evidence="7">
    <location>
        <begin position="143"/>
        <end position="145"/>
    </location>
</feature>
<feature type="turn" evidence="6">
    <location>
        <begin position="151"/>
        <end position="154"/>
    </location>
</feature>
<feature type="turn" evidence="7">
    <location>
        <begin position="156"/>
        <end position="159"/>
    </location>
</feature>
<feature type="turn" evidence="7">
    <location>
        <begin position="161"/>
        <end position="163"/>
    </location>
</feature>
<feature type="helix" evidence="7">
    <location>
        <begin position="168"/>
        <end position="196"/>
    </location>
</feature>
<feature type="helix" evidence="7">
    <location>
        <begin position="204"/>
        <end position="206"/>
    </location>
</feature>
<feature type="helix" evidence="7">
    <location>
        <begin position="209"/>
        <end position="241"/>
    </location>
</feature>
<feature type="helix" evidence="7">
    <location>
        <begin position="248"/>
        <end position="250"/>
    </location>
</feature>
<feature type="helix" evidence="7">
    <location>
        <begin position="252"/>
        <end position="285"/>
    </location>
</feature>
<feature type="turn" evidence="7">
    <location>
        <begin position="286"/>
        <end position="288"/>
    </location>
</feature>
<feature type="helix" evidence="7">
    <location>
        <begin position="294"/>
        <end position="307"/>
    </location>
</feature>
<feature type="turn" evidence="7">
    <location>
        <begin position="308"/>
        <end position="310"/>
    </location>
</feature>
<feature type="helix" evidence="7">
    <location>
        <begin position="312"/>
        <end position="319"/>
    </location>
</feature>
<feature type="helix" evidence="7">
    <location>
        <begin position="324"/>
        <end position="349"/>
    </location>
</feature>
<feature type="helix" evidence="7">
    <location>
        <begin position="358"/>
        <end position="380"/>
    </location>
</feature>
<feature type="helix" evidence="7">
    <location>
        <begin position="383"/>
        <end position="389"/>
    </location>
</feature>
<feature type="helix" evidence="7">
    <location>
        <begin position="393"/>
        <end position="406"/>
    </location>
</feature>
<feature type="helix" evidence="7">
    <location>
        <begin position="409"/>
        <end position="423"/>
    </location>
</feature>
<feature type="strand" evidence="8">
    <location>
        <begin position="424"/>
        <end position="426"/>
    </location>
</feature>
<feature type="helix" evidence="7">
    <location>
        <begin position="429"/>
        <end position="447"/>
    </location>
</feature>
<feature type="helix" evidence="7">
    <location>
        <begin position="450"/>
        <end position="455"/>
    </location>
</feature>
<feature type="strand" evidence="7">
    <location>
        <begin position="459"/>
        <end position="461"/>
    </location>
</feature>
<feature type="helix" evidence="7">
    <location>
        <begin position="467"/>
        <end position="469"/>
    </location>
</feature>
<feature type="helix" evidence="7">
    <location>
        <begin position="472"/>
        <end position="487"/>
    </location>
</feature>
<feature type="helix" evidence="7">
    <location>
        <begin position="489"/>
        <end position="502"/>
    </location>
</feature>
<feature type="helix" evidence="7">
    <location>
        <begin position="518"/>
        <end position="521"/>
    </location>
</feature>
<feature type="helix" evidence="7">
    <location>
        <begin position="542"/>
        <end position="547"/>
    </location>
</feature>
<feature type="helix" evidence="7">
    <location>
        <begin position="549"/>
        <end position="551"/>
    </location>
</feature>
<feature type="helix" evidence="7">
    <location>
        <begin position="552"/>
        <end position="557"/>
    </location>
</feature>
<feature type="strand" evidence="7">
    <location>
        <begin position="560"/>
        <end position="562"/>
    </location>
</feature>
<feature type="helix" evidence="7">
    <location>
        <begin position="566"/>
        <end position="568"/>
    </location>
</feature>
<protein>
    <recommendedName>
        <fullName>Cytochrome c oxidase subunit 1</fullName>
        <ecNumber>7.1.1.9</ecNumber>
    </recommendedName>
    <alternativeName>
        <fullName>Cytochrome aa3 subunit 1</fullName>
    </alternativeName>
    <alternativeName>
        <fullName>Cytochrome c oxidase polypeptide I</fullName>
    </alternativeName>
</protein>
<organism>
    <name type="scientific">Corynebacterium glutamicum (strain ATCC 13032 / DSM 20300 / JCM 1318 / BCRC 11384 / CCUG 27702 / LMG 3730 / NBRC 12168 / NCIMB 10025 / NRRL B-2784 / 534)</name>
    <dbReference type="NCBI Taxonomy" id="196627"/>
    <lineage>
        <taxon>Bacteria</taxon>
        <taxon>Bacillati</taxon>
        <taxon>Actinomycetota</taxon>
        <taxon>Actinomycetes</taxon>
        <taxon>Mycobacteriales</taxon>
        <taxon>Corynebacteriaceae</taxon>
        <taxon>Corynebacterium</taxon>
    </lineage>
</organism>
<reference key="1">
    <citation type="journal article" date="2001" name="Arch. Microbiol.">
        <title>Molecular analysis of the cytochrome bc1-aa3 branch of the Corynebacterium glutamicum respiratory chain containing an unusual diheme cytochrome c1.</title>
        <authorList>
            <person name="Niebisch A."/>
            <person name="Bott M."/>
        </authorList>
    </citation>
    <scope>NUCLEOTIDE SEQUENCE [GENOMIC DNA]</scope>
    <source>
        <strain>ATCC 13032 / DSM 20300 / JCM 1318 / BCRC 11384 / CCUG 27702 / LMG 3730 / NBRC 12168 / NCIMB 10025 / NRRL B-2784 / 534</strain>
    </source>
</reference>
<reference key="2">
    <citation type="journal article" date="2001" name="Microbiology">
        <title>Cytochrome c oxidase contains an extra charged amino acid cluster in a new type of respiratory chain in the amino acid-producing Gram-positive bacterium Corynebacterium glutamicum.</title>
        <authorList>
            <person name="Sakamoto J."/>
            <person name="Shibata T."/>
            <person name="Mine T."/>
            <person name="Miyahara R."/>
            <person name="Torigoe T."/>
            <person name="Noguchi S."/>
            <person name="Matsushita K."/>
            <person name="Sone N."/>
        </authorList>
    </citation>
    <scope>NUCLEOTIDE SEQUENCE [GENOMIC DNA]</scope>
    <scope>SUBUNIT</scope>
    <scope>HEME CHARACTERIZATION</scope>
    <scope>MASS SPECTROMETRY</scope>
    <source>
        <strain>ATCC 13032 / DSM 20300 / JCM 1318 / BCRC 11384 / CCUG 27702 / LMG 3730 / NBRC 12168 / NCIMB 10025 / NRRL B-2784 / 534</strain>
    </source>
</reference>
<reference key="3">
    <citation type="journal article" date="2003" name="Appl. Microbiol. Biotechnol.">
        <title>The Corynebacterium glutamicum genome: features and impacts on biotechnological processes.</title>
        <authorList>
            <person name="Ikeda M."/>
            <person name="Nakagawa S."/>
        </authorList>
    </citation>
    <scope>NUCLEOTIDE SEQUENCE [LARGE SCALE GENOMIC DNA]</scope>
    <source>
        <strain>ATCC 13032 / DSM 20300 / JCM 1318 / BCRC 11384 / CCUG 27702 / LMG 3730 / NBRC 12168 / NCIMB 10025 / NRRL B-2784 / 534</strain>
    </source>
</reference>
<reference key="4">
    <citation type="journal article" date="2003" name="J. Biotechnol.">
        <title>The complete Corynebacterium glutamicum ATCC 13032 genome sequence and its impact on the production of L-aspartate-derived amino acids and vitamins.</title>
        <authorList>
            <person name="Kalinowski J."/>
            <person name="Bathe B."/>
            <person name="Bartels D."/>
            <person name="Bischoff N."/>
            <person name="Bott M."/>
            <person name="Burkovski A."/>
            <person name="Dusch N."/>
            <person name="Eggeling L."/>
            <person name="Eikmanns B.J."/>
            <person name="Gaigalat L."/>
            <person name="Goesmann A."/>
            <person name="Hartmann M."/>
            <person name="Huthmacher K."/>
            <person name="Kraemer R."/>
            <person name="Linke B."/>
            <person name="McHardy A.C."/>
            <person name="Meyer F."/>
            <person name="Moeckel B."/>
            <person name="Pfefferle W."/>
            <person name="Puehler A."/>
            <person name="Rey D.A."/>
            <person name="Rueckert C."/>
            <person name="Rupp O."/>
            <person name="Sahm H."/>
            <person name="Wendisch V.F."/>
            <person name="Wiegraebe I."/>
            <person name="Tauch A."/>
        </authorList>
    </citation>
    <scope>NUCLEOTIDE SEQUENCE [LARGE SCALE GENOMIC DNA]</scope>
    <source>
        <strain>ATCC 13032 / DSM 20300 / JCM 1318 / BCRC 11384 / CCUG 27702 / LMG 3730 / NBRC 12168 / NCIMB 10025 / NRRL B-2784 / 534</strain>
    </source>
</reference>
<reference key="5">
    <citation type="journal article" date="2003" name="J. Biol. Chem.">
        <title>Purification of a cytochrome bc1-aa3 supercomplex with quinol oxidase activity from Corynebacterium glutamicum. Identification of a fourth subunity of cytochrome aa3 oxidase and mutational analysis of diheme cytochrome c1.</title>
        <authorList>
            <person name="Niebisch A."/>
            <person name="Bott M."/>
        </authorList>
    </citation>
    <scope>DETECTION IN A SUPERCOMPLEX WITH MENAQUINOL-CYTOCHROME C REDUCTASE (CYTOCHROME BC1)</scope>
    <source>
        <strain>ATCC 13032 / DSM 20300 / JCM 1318 / BCRC 11384 / CCUG 27702 / LMG 3730 / NBRC 12168 / NCIMB 10025 / NRRL B-2784 / 534</strain>
    </source>
</reference>
<proteinExistence type="evidence at protein level"/>
<keyword id="KW-0002">3D-structure</keyword>
<keyword id="KW-1003">Cell membrane</keyword>
<keyword id="KW-0186">Copper</keyword>
<keyword id="KW-0249">Electron transport</keyword>
<keyword id="KW-0349">Heme</keyword>
<keyword id="KW-0408">Iron</keyword>
<keyword id="KW-0472">Membrane</keyword>
<keyword id="KW-0479">Metal-binding</keyword>
<keyword id="KW-1185">Reference proteome</keyword>
<keyword id="KW-0679">Respiratory chain</keyword>
<keyword id="KW-1278">Translocase</keyword>
<keyword id="KW-0812">Transmembrane</keyword>
<keyword id="KW-1133">Transmembrane helix</keyword>
<keyword id="KW-0813">Transport</keyword>
<sequence>MTAVAPRVDGHVAPQRPEPTGHARKGSKAWLMMTTTDHKQLGIMYIIMSFSFFFLGGLMALLIRAELFTPGLQFLSNEQFNQLFTMHGTVMLLLYGTPIVWGFANYVLPLQIGAPDVAFPRLNAFGFWITTVGGVAMLTGFLTPGGAADFGWTMYSPLSDAIHSPGLGSDMWIVGVGATGIGSVASAINMLTTILCLRAPGMTMFRMPIFTWNIFVVSVLALLIFPLLLAAALGVLYDRKLGGHLYDPANGGSLLWQHLFWFFGHPEVYVLALPFFGIVSEIIPVFSRKPMFGYVGLIFATLSIGALSMAVWAHHMFVTGAVLLPFFSFMTFLISVPTGVKFFNWVGTMWKGHITWETPMIWSVGFMATFLFGGLTGIMLASPPLDFHLADSYFLIAHFHYTLFGTVVFASCAGVYFWFPKMTGRMMDERLGKIHFWLTFVGFHGTFLIQHWVGNMGMPRRYADYLDSDGFTIYNQISTVFSFLLGLSVIPFIWNVFKSWRYGELVTVDDPWGYGNSLEWATSCPPPRHNFASLPRIRSERPAFELHYPHMIERMRAEAHTGHHDDINAPELGTAPALASDSSR</sequence>
<dbReference type="EC" id="7.1.1.9"/>
<dbReference type="EMBL" id="AJ306417">
    <property type="protein sequence ID" value="CAC33824.1"/>
    <property type="molecule type" value="Genomic_DNA"/>
</dbReference>
<dbReference type="EMBL" id="AB052748">
    <property type="protein sequence ID" value="BAB64406.1"/>
    <property type="molecule type" value="Genomic_DNA"/>
</dbReference>
<dbReference type="EMBL" id="BA000036">
    <property type="protein sequence ID" value="BAB99916.1"/>
    <property type="molecule type" value="Genomic_DNA"/>
</dbReference>
<dbReference type="EMBL" id="BX927155">
    <property type="protein sequence ID" value="CAF21186.1"/>
    <property type="molecule type" value="Genomic_DNA"/>
</dbReference>
<dbReference type="RefSeq" id="NP_601724.2">
    <property type="nucleotide sequence ID" value="NC_003450.3"/>
</dbReference>
<dbReference type="RefSeq" id="WP_011015188.1">
    <property type="nucleotide sequence ID" value="NC_006958.1"/>
</dbReference>
<dbReference type="PDB" id="7Q21">
    <property type="method" value="EM"/>
    <property type="resolution" value="3.00 A"/>
    <property type="chains" value="D/d=1-584"/>
</dbReference>
<dbReference type="PDB" id="7QHM">
    <property type="method" value="EM"/>
    <property type="resolution" value="2.80 A"/>
    <property type="chains" value="D/Q=1-584"/>
</dbReference>
<dbReference type="PDB" id="7QHO">
    <property type="method" value="EM"/>
    <property type="resolution" value="3.10 A"/>
    <property type="chains" value="D/Q=1-584"/>
</dbReference>
<dbReference type="PDBsum" id="7Q21"/>
<dbReference type="PDBsum" id="7QHM"/>
<dbReference type="PDBsum" id="7QHO"/>
<dbReference type="EMDB" id="EMD-13777"/>
<dbReference type="EMDB" id="EMD-13976"/>
<dbReference type="EMDB" id="EMD-13977"/>
<dbReference type="SMR" id="Q79VD7"/>
<dbReference type="STRING" id="196627.cg2780"/>
<dbReference type="TCDB" id="3.D.4.4.2">
    <property type="family name" value="the proton-translocating cytochrome oxidase (cox) superfamily"/>
</dbReference>
<dbReference type="GeneID" id="1020472"/>
<dbReference type="KEGG" id="cgb:cg2780"/>
<dbReference type="KEGG" id="cgl:Cgl2523"/>
<dbReference type="PATRIC" id="fig|196627.13.peg.2457"/>
<dbReference type="eggNOG" id="COG0843">
    <property type="taxonomic scope" value="Bacteria"/>
</dbReference>
<dbReference type="HOGENOM" id="CLU_011899_7_3_11"/>
<dbReference type="OrthoDB" id="9803294at2"/>
<dbReference type="BioCyc" id="CORYNE:G18NG-12127-MONOMER"/>
<dbReference type="UniPathway" id="UPA00705"/>
<dbReference type="Proteomes" id="UP000000582">
    <property type="component" value="Chromosome"/>
</dbReference>
<dbReference type="Proteomes" id="UP000001009">
    <property type="component" value="Chromosome"/>
</dbReference>
<dbReference type="GO" id="GO:0005886">
    <property type="term" value="C:plasma membrane"/>
    <property type="evidence" value="ECO:0007669"/>
    <property type="project" value="UniProtKB-SubCell"/>
</dbReference>
<dbReference type="GO" id="GO:0004129">
    <property type="term" value="F:cytochrome-c oxidase activity"/>
    <property type="evidence" value="ECO:0007669"/>
    <property type="project" value="UniProtKB-EC"/>
</dbReference>
<dbReference type="GO" id="GO:0020037">
    <property type="term" value="F:heme binding"/>
    <property type="evidence" value="ECO:0007669"/>
    <property type="project" value="InterPro"/>
</dbReference>
<dbReference type="GO" id="GO:0046872">
    <property type="term" value="F:metal ion binding"/>
    <property type="evidence" value="ECO:0007669"/>
    <property type="project" value="UniProtKB-KW"/>
</dbReference>
<dbReference type="GO" id="GO:0015990">
    <property type="term" value="P:electron transport coupled proton transport"/>
    <property type="evidence" value="ECO:0007669"/>
    <property type="project" value="InterPro"/>
</dbReference>
<dbReference type="GO" id="GO:0006119">
    <property type="term" value="P:oxidative phosphorylation"/>
    <property type="evidence" value="ECO:0007669"/>
    <property type="project" value="UniProtKB-UniPathway"/>
</dbReference>
<dbReference type="GO" id="GO:0022904">
    <property type="term" value="P:respiratory electron transport chain"/>
    <property type="evidence" value="ECO:0007669"/>
    <property type="project" value="TreeGrafter"/>
</dbReference>
<dbReference type="CDD" id="cd01662">
    <property type="entry name" value="Ubiquinol_Oxidase_I"/>
    <property type="match status" value="1"/>
</dbReference>
<dbReference type="Gene3D" id="1.20.210.10">
    <property type="entry name" value="Cytochrome c oxidase-like, subunit I domain"/>
    <property type="match status" value="1"/>
</dbReference>
<dbReference type="InterPro" id="IPR023616">
    <property type="entry name" value="Cyt_c_oxase-like_su1_dom"/>
</dbReference>
<dbReference type="InterPro" id="IPR036927">
    <property type="entry name" value="Cyt_c_oxase-like_su1_sf"/>
</dbReference>
<dbReference type="InterPro" id="IPR000883">
    <property type="entry name" value="Cyt_C_Oxase_1"/>
</dbReference>
<dbReference type="InterPro" id="IPR023615">
    <property type="entry name" value="Cyt_c_Oxase_su1_BS"/>
</dbReference>
<dbReference type="InterPro" id="IPR014241">
    <property type="entry name" value="Cyt_c_oxidase_su1_bac"/>
</dbReference>
<dbReference type="NCBIfam" id="TIGR02891">
    <property type="entry name" value="CtaD_CoxA"/>
    <property type="match status" value="1"/>
</dbReference>
<dbReference type="PANTHER" id="PTHR10422">
    <property type="entry name" value="CYTOCHROME C OXIDASE SUBUNIT 1"/>
    <property type="match status" value="1"/>
</dbReference>
<dbReference type="PANTHER" id="PTHR10422:SF18">
    <property type="entry name" value="CYTOCHROME C OXIDASE SUBUNIT 1"/>
    <property type="match status" value="1"/>
</dbReference>
<dbReference type="Pfam" id="PF00115">
    <property type="entry name" value="COX1"/>
    <property type="match status" value="1"/>
</dbReference>
<dbReference type="PRINTS" id="PR01165">
    <property type="entry name" value="CYCOXIDASEI"/>
</dbReference>
<dbReference type="SUPFAM" id="SSF81442">
    <property type="entry name" value="Cytochrome c oxidase subunit I-like"/>
    <property type="match status" value="1"/>
</dbReference>
<dbReference type="PROSITE" id="PS50855">
    <property type="entry name" value="COX1"/>
    <property type="match status" value="1"/>
</dbReference>
<dbReference type="PROSITE" id="PS00077">
    <property type="entry name" value="COX1_CUB"/>
    <property type="match status" value="1"/>
</dbReference>
<gene>
    <name type="primary">ctaD</name>
    <name type="ordered locus">Cgl2523</name>
    <name type="ordered locus">cg2780</name>
</gene>
<comment type="function">
    <text evidence="1">Cytochrome c oxidase is the component of the respiratory chain that catalyzes the reduction of oxygen to water. Subunits 1-3 form the functional core of the enzyme complex. CO I is the catalytic subunit of the enzyme. Electrons originating in cytochrome c are transferred via the copper A center of subunit 2 and heme A of subunit 1 to the bimetallic center formed by heme A3 and copper B (By similarity).</text>
</comment>
<comment type="catalytic activity">
    <reaction>
        <text>4 Fe(II)-[cytochrome c] + O2 + 8 H(+)(in) = 4 Fe(III)-[cytochrome c] + 2 H2O + 4 H(+)(out)</text>
        <dbReference type="Rhea" id="RHEA:11436"/>
        <dbReference type="Rhea" id="RHEA-COMP:10350"/>
        <dbReference type="Rhea" id="RHEA-COMP:14399"/>
        <dbReference type="ChEBI" id="CHEBI:15377"/>
        <dbReference type="ChEBI" id="CHEBI:15378"/>
        <dbReference type="ChEBI" id="CHEBI:15379"/>
        <dbReference type="ChEBI" id="CHEBI:29033"/>
        <dbReference type="ChEBI" id="CHEBI:29034"/>
        <dbReference type="EC" id="7.1.1.9"/>
    </reaction>
</comment>
<comment type="cofactor">
    <cofactor evidence="1">
        <name>Cu(2+)</name>
        <dbReference type="ChEBI" id="CHEBI:29036"/>
    </cofactor>
    <text evidence="1">Binds 1 copper B ion per subunit.</text>
</comment>
<comment type="cofactor">
    <cofactor evidence="1">
        <name>heme</name>
        <dbReference type="ChEBI" id="CHEBI:30413"/>
    </cofactor>
    <text evidence="1">Binds 2 heme groups per subunit.</text>
</comment>
<comment type="pathway">
    <text>Energy metabolism; oxidative phosphorylation.</text>
</comment>
<comment type="subunit">
    <text evidence="4">Associates with subunits II, III and IV to form cytochrome c oxidase. The 4 subunit cytochrome c oxidase forms a supercomplex with the menaquinol-cytochrome c reductase complex (cytochrome bc1).</text>
</comment>
<comment type="subcellular location">
    <subcellularLocation>
        <location>Cell membrane</location>
        <topology>Multi-pass membrane protein</topology>
    </subcellularLocation>
</comment>
<comment type="mass spectrometry"/>
<comment type="similarity">
    <text evidence="5">Belongs to the heme-copper respiratory oxidase family.</text>
</comment>